<protein>
    <recommendedName>
        <fullName evidence="1">Nucleoid-associated protein PHZ_c0369</fullName>
    </recommendedName>
</protein>
<gene>
    <name type="ordered locus">PHZ_c0369</name>
</gene>
<keyword id="KW-0963">Cytoplasm</keyword>
<keyword id="KW-0238">DNA-binding</keyword>
<keyword id="KW-1185">Reference proteome</keyword>
<feature type="chain" id="PRO_1000114630" description="Nucleoid-associated protein PHZ_c0369">
    <location>
        <begin position="1"/>
        <end position="107"/>
    </location>
</feature>
<reference key="1">
    <citation type="journal article" date="2008" name="BMC Genomics">
        <title>Complete genome of Phenylobacterium zucineum - a novel facultative intracellular bacterium isolated from human erythroleukemia cell line K562.</title>
        <authorList>
            <person name="Luo Y."/>
            <person name="Xu X."/>
            <person name="Ding Z."/>
            <person name="Liu Z."/>
            <person name="Zhang B."/>
            <person name="Yan Z."/>
            <person name="Sun J."/>
            <person name="Hu S."/>
            <person name="Hu X."/>
        </authorList>
    </citation>
    <scope>NUCLEOTIDE SEQUENCE [LARGE SCALE GENOMIC DNA]</scope>
    <source>
        <strain>HLK1</strain>
    </source>
</reference>
<name>Y369_PHEZH</name>
<evidence type="ECO:0000255" key="1">
    <source>
        <dbReference type="HAMAP-Rule" id="MF_00274"/>
    </source>
</evidence>
<proteinExistence type="inferred from homology"/>
<dbReference type="EMBL" id="CP000747">
    <property type="protein sequence ID" value="ACG76783.1"/>
    <property type="molecule type" value="Genomic_DNA"/>
</dbReference>
<dbReference type="RefSeq" id="WP_012520931.1">
    <property type="nucleotide sequence ID" value="NC_011144.1"/>
</dbReference>
<dbReference type="SMR" id="B4RDT4"/>
<dbReference type="STRING" id="450851.PHZ_c0369"/>
<dbReference type="KEGG" id="pzu:PHZ_c0369"/>
<dbReference type="eggNOG" id="COG0718">
    <property type="taxonomic scope" value="Bacteria"/>
</dbReference>
<dbReference type="HOGENOM" id="CLU_140930_4_1_5"/>
<dbReference type="OrthoDB" id="9803080at2"/>
<dbReference type="Proteomes" id="UP000001868">
    <property type="component" value="Chromosome"/>
</dbReference>
<dbReference type="GO" id="GO:0043590">
    <property type="term" value="C:bacterial nucleoid"/>
    <property type="evidence" value="ECO:0007669"/>
    <property type="project" value="UniProtKB-UniRule"/>
</dbReference>
<dbReference type="GO" id="GO:0005829">
    <property type="term" value="C:cytosol"/>
    <property type="evidence" value="ECO:0007669"/>
    <property type="project" value="TreeGrafter"/>
</dbReference>
<dbReference type="GO" id="GO:0003677">
    <property type="term" value="F:DNA binding"/>
    <property type="evidence" value="ECO:0007669"/>
    <property type="project" value="UniProtKB-UniRule"/>
</dbReference>
<dbReference type="Gene3D" id="3.30.1310.10">
    <property type="entry name" value="Nucleoid-associated protein YbaB-like domain"/>
    <property type="match status" value="1"/>
</dbReference>
<dbReference type="HAMAP" id="MF_00274">
    <property type="entry name" value="DNA_YbaB_EbfC"/>
    <property type="match status" value="1"/>
</dbReference>
<dbReference type="InterPro" id="IPR036894">
    <property type="entry name" value="YbaB-like_sf"/>
</dbReference>
<dbReference type="InterPro" id="IPR004401">
    <property type="entry name" value="YbaB/EbfC"/>
</dbReference>
<dbReference type="NCBIfam" id="TIGR00103">
    <property type="entry name" value="DNA_YbaB_EbfC"/>
    <property type="match status" value="1"/>
</dbReference>
<dbReference type="NCBIfam" id="NF011218">
    <property type="entry name" value="PRK14625.1"/>
    <property type="match status" value="1"/>
</dbReference>
<dbReference type="PANTHER" id="PTHR33449">
    <property type="entry name" value="NUCLEOID-ASSOCIATED PROTEIN YBAB"/>
    <property type="match status" value="1"/>
</dbReference>
<dbReference type="PANTHER" id="PTHR33449:SF1">
    <property type="entry name" value="NUCLEOID-ASSOCIATED PROTEIN YBAB"/>
    <property type="match status" value="1"/>
</dbReference>
<dbReference type="Pfam" id="PF02575">
    <property type="entry name" value="YbaB_DNA_bd"/>
    <property type="match status" value="1"/>
</dbReference>
<dbReference type="PIRSF" id="PIRSF004555">
    <property type="entry name" value="UCP004555"/>
    <property type="match status" value="1"/>
</dbReference>
<dbReference type="SUPFAM" id="SSF82607">
    <property type="entry name" value="YbaB-like"/>
    <property type="match status" value="1"/>
</dbReference>
<accession>B4RDT4</accession>
<organism>
    <name type="scientific">Phenylobacterium zucineum (strain HLK1)</name>
    <dbReference type="NCBI Taxonomy" id="450851"/>
    <lineage>
        <taxon>Bacteria</taxon>
        <taxon>Pseudomonadati</taxon>
        <taxon>Pseudomonadota</taxon>
        <taxon>Alphaproteobacteria</taxon>
        <taxon>Caulobacterales</taxon>
        <taxon>Caulobacteraceae</taxon>
        <taxon>Phenylobacterium</taxon>
    </lineage>
</organism>
<comment type="function">
    <text evidence="1">Binds to DNA and alters its conformation. May be involved in regulation of gene expression, nucleoid organization and DNA protection.</text>
</comment>
<comment type="subunit">
    <text evidence="1">Homodimer.</text>
</comment>
<comment type="subcellular location">
    <subcellularLocation>
        <location evidence="1">Cytoplasm</location>
        <location evidence="1">Nucleoid</location>
    </subcellularLocation>
</comment>
<comment type="similarity">
    <text evidence="1">Belongs to the YbaB/EbfC family.</text>
</comment>
<sequence>MKDLNSLMKQAQAMQQKLADAQGRIAEMEVEGTSGGGMVKLVLKGTGELARVDLDESLMAPGEGEVVADLIVAAHADAKRKLDEKQAEVMREAAGPFAGMPGMPKLF</sequence>